<keyword id="KW-0066">ATP synthesis</keyword>
<keyword id="KW-0997">Cell inner membrane</keyword>
<keyword id="KW-1003">Cell membrane</keyword>
<keyword id="KW-0138">CF(0)</keyword>
<keyword id="KW-0375">Hydrogen ion transport</keyword>
<keyword id="KW-0406">Ion transport</keyword>
<keyword id="KW-0472">Membrane</keyword>
<keyword id="KW-0812">Transmembrane</keyword>
<keyword id="KW-1133">Transmembrane helix</keyword>
<keyword id="KW-0813">Transport</keyword>
<gene>
    <name evidence="1" type="primary">atpB</name>
    <name type="ordered locus">SG2408</name>
</gene>
<accession>Q2NQ92</accession>
<protein>
    <recommendedName>
        <fullName evidence="1">ATP synthase subunit a</fullName>
    </recommendedName>
    <alternativeName>
        <fullName evidence="1">ATP synthase F0 sector subunit a</fullName>
    </alternativeName>
    <alternativeName>
        <fullName evidence="1">F-ATPase subunit 6</fullName>
    </alternativeName>
</protein>
<dbReference type="EMBL" id="AP008232">
    <property type="protein sequence ID" value="BAE75683.1"/>
    <property type="molecule type" value="Genomic_DNA"/>
</dbReference>
<dbReference type="RefSeq" id="WP_011412214.1">
    <property type="nucleotide sequence ID" value="NC_007712.1"/>
</dbReference>
<dbReference type="SMR" id="Q2NQ92"/>
<dbReference type="STRING" id="343509.SG2408"/>
<dbReference type="KEGG" id="sgl:SG2408"/>
<dbReference type="eggNOG" id="COG0356">
    <property type="taxonomic scope" value="Bacteria"/>
</dbReference>
<dbReference type="HOGENOM" id="CLU_041018_1_0_6"/>
<dbReference type="OrthoDB" id="9789241at2"/>
<dbReference type="BioCyc" id="SGLO343509:SGP1_RS21855-MONOMER"/>
<dbReference type="Proteomes" id="UP000001932">
    <property type="component" value="Chromosome"/>
</dbReference>
<dbReference type="GO" id="GO:0005886">
    <property type="term" value="C:plasma membrane"/>
    <property type="evidence" value="ECO:0007669"/>
    <property type="project" value="UniProtKB-SubCell"/>
</dbReference>
<dbReference type="GO" id="GO:0045259">
    <property type="term" value="C:proton-transporting ATP synthase complex"/>
    <property type="evidence" value="ECO:0007669"/>
    <property type="project" value="UniProtKB-KW"/>
</dbReference>
<dbReference type="GO" id="GO:0046933">
    <property type="term" value="F:proton-transporting ATP synthase activity, rotational mechanism"/>
    <property type="evidence" value="ECO:0007669"/>
    <property type="project" value="UniProtKB-UniRule"/>
</dbReference>
<dbReference type="GO" id="GO:0042777">
    <property type="term" value="P:proton motive force-driven plasma membrane ATP synthesis"/>
    <property type="evidence" value="ECO:0007669"/>
    <property type="project" value="TreeGrafter"/>
</dbReference>
<dbReference type="CDD" id="cd00310">
    <property type="entry name" value="ATP-synt_Fo_a_6"/>
    <property type="match status" value="1"/>
</dbReference>
<dbReference type="FunFam" id="1.20.120.220:FF:000002">
    <property type="entry name" value="ATP synthase subunit a"/>
    <property type="match status" value="1"/>
</dbReference>
<dbReference type="Gene3D" id="1.20.120.220">
    <property type="entry name" value="ATP synthase, F0 complex, subunit A"/>
    <property type="match status" value="1"/>
</dbReference>
<dbReference type="HAMAP" id="MF_01393">
    <property type="entry name" value="ATP_synth_a_bact"/>
    <property type="match status" value="1"/>
</dbReference>
<dbReference type="InterPro" id="IPR045082">
    <property type="entry name" value="ATP_syn_F0_a_bact/chloroplast"/>
</dbReference>
<dbReference type="InterPro" id="IPR000568">
    <property type="entry name" value="ATP_synth_F0_asu"/>
</dbReference>
<dbReference type="InterPro" id="IPR023011">
    <property type="entry name" value="ATP_synth_F0_asu_AS"/>
</dbReference>
<dbReference type="InterPro" id="IPR035908">
    <property type="entry name" value="F0_ATP_A_sf"/>
</dbReference>
<dbReference type="NCBIfam" id="TIGR01131">
    <property type="entry name" value="ATP_synt_6_or_A"/>
    <property type="match status" value="1"/>
</dbReference>
<dbReference type="NCBIfam" id="NF004477">
    <property type="entry name" value="PRK05815.1-1"/>
    <property type="match status" value="1"/>
</dbReference>
<dbReference type="PANTHER" id="PTHR42823">
    <property type="entry name" value="ATP SYNTHASE SUBUNIT A, CHLOROPLASTIC"/>
    <property type="match status" value="1"/>
</dbReference>
<dbReference type="PANTHER" id="PTHR42823:SF3">
    <property type="entry name" value="ATP SYNTHASE SUBUNIT A, CHLOROPLASTIC"/>
    <property type="match status" value="1"/>
</dbReference>
<dbReference type="Pfam" id="PF00119">
    <property type="entry name" value="ATP-synt_A"/>
    <property type="match status" value="1"/>
</dbReference>
<dbReference type="PRINTS" id="PR00123">
    <property type="entry name" value="ATPASEA"/>
</dbReference>
<dbReference type="SUPFAM" id="SSF81336">
    <property type="entry name" value="F1F0 ATP synthase subunit A"/>
    <property type="match status" value="1"/>
</dbReference>
<dbReference type="PROSITE" id="PS00449">
    <property type="entry name" value="ATPASE_A"/>
    <property type="match status" value="1"/>
</dbReference>
<feature type="chain" id="PRO_0000362470" description="ATP synthase subunit a">
    <location>
        <begin position="1"/>
        <end position="272"/>
    </location>
</feature>
<feature type="transmembrane region" description="Helical" evidence="1">
    <location>
        <begin position="41"/>
        <end position="61"/>
    </location>
</feature>
<feature type="transmembrane region" description="Helical" evidence="1">
    <location>
        <begin position="101"/>
        <end position="121"/>
    </location>
</feature>
<feature type="transmembrane region" description="Helical" evidence="1">
    <location>
        <begin position="143"/>
        <end position="165"/>
    </location>
</feature>
<feature type="transmembrane region" description="Helical" evidence="1">
    <location>
        <begin position="221"/>
        <end position="241"/>
    </location>
</feature>
<feature type="transmembrane region" description="Helical" evidence="1">
    <location>
        <begin position="243"/>
        <end position="263"/>
    </location>
</feature>
<sequence>MSASGEISTPQEYIGHHLNNLQLDMRTFELVNHHTASSFWVLNIDSMFFSLLLGAIFLLIFGRVAKGATSGVPGKMQTFVELVVGFVDGSVRDMFHGKSKLIAPLALTIFVWVFLMNLMDLLPIDLLPYLGEHVLGLPALRVVPSADVNITLSMALGVFILILYYSVMMKGIGGFVKELTLQPFNHPIFIPVNLILEGVSLLSKPVSLGLRLFGNMYAGELIFILIAGLLPWWSQWILNVPWAIFHILIITLQAFIFMVLTIVYLAMASEEH</sequence>
<reference key="1">
    <citation type="journal article" date="2006" name="Genome Res.">
        <title>Massive genome erosion and functional adaptations provide insights into the symbiotic lifestyle of Sodalis glossinidius in the tsetse host.</title>
        <authorList>
            <person name="Toh H."/>
            <person name="Weiss B.L."/>
            <person name="Perkin S.A.H."/>
            <person name="Yamashita A."/>
            <person name="Oshima K."/>
            <person name="Hattori M."/>
            <person name="Aksoy S."/>
        </authorList>
    </citation>
    <scope>NUCLEOTIDE SEQUENCE [LARGE SCALE GENOMIC DNA]</scope>
    <source>
        <strain>morsitans</strain>
    </source>
</reference>
<proteinExistence type="inferred from homology"/>
<name>ATP6_SODGM</name>
<evidence type="ECO:0000255" key="1">
    <source>
        <dbReference type="HAMAP-Rule" id="MF_01393"/>
    </source>
</evidence>
<organism>
    <name type="scientific">Sodalis glossinidius (strain morsitans)</name>
    <dbReference type="NCBI Taxonomy" id="343509"/>
    <lineage>
        <taxon>Bacteria</taxon>
        <taxon>Pseudomonadati</taxon>
        <taxon>Pseudomonadota</taxon>
        <taxon>Gammaproteobacteria</taxon>
        <taxon>Enterobacterales</taxon>
        <taxon>Bruguierivoracaceae</taxon>
        <taxon>Sodalis</taxon>
    </lineage>
</organism>
<comment type="function">
    <text evidence="1">Key component of the proton channel; it plays a direct role in the translocation of protons across the membrane.</text>
</comment>
<comment type="subunit">
    <text evidence="1">F-type ATPases have 2 components, CF(1) - the catalytic core - and CF(0) - the membrane proton channel. CF(1) has five subunits: alpha(3), beta(3), gamma(1), delta(1), epsilon(1). CF(0) has three main subunits: a(1), b(2) and c(9-12). The alpha and beta chains form an alternating ring which encloses part of the gamma chain. CF(1) is attached to CF(0) by a central stalk formed by the gamma and epsilon chains, while a peripheral stalk is formed by the delta and b chains.</text>
</comment>
<comment type="subcellular location">
    <subcellularLocation>
        <location evidence="1">Cell inner membrane</location>
        <topology evidence="1">Multi-pass membrane protein</topology>
    </subcellularLocation>
</comment>
<comment type="similarity">
    <text evidence="1">Belongs to the ATPase A chain family.</text>
</comment>